<sequence length="249" mass="28444">MAQAVEEWYRQMPIITRSYLTAAVVTTVGCTLEIISPYHLYLNPKLVVQHYEIWRLVTNFLYFRKMDLDFLFHMFFLARYCKLLEENSFRGRTADFFYMLLFGATVLTGIVLIGGMIPYISETFARILFLSNSLTFMMVYVWSKHNPFIHMSFLGLFTFTAAYLPWVLLGFSILVGSSTWVDLLGMIAGHVYYFLEDVYPRMTGRRPLKTPSFIKALFADDNVVVAQPPNAGIGAGARFGAIGVDPQAQ</sequence>
<accession>Q4G2J3</accession>
<gene>
    <name type="primary">DER2.2</name>
</gene>
<evidence type="ECO:0000255" key="1"/>
<evidence type="ECO:0000269" key="2">
    <source>
    </source>
</evidence>
<evidence type="ECO:0000305" key="3"/>
<comment type="function">
    <text evidence="2">May be involved in the degradation process of specific misfolded endoplasmic reticulum (ER) luminal proteins.</text>
</comment>
<comment type="subcellular location">
    <subcellularLocation>
        <location evidence="2">Endoplasmic reticulum membrane</location>
        <topology evidence="2">Multi-pass membrane protein</topology>
    </subcellularLocation>
</comment>
<comment type="tissue specificity">
    <text evidence="2">Expressed in roots, stalks, leaves, immature ears, embryo and endosperm.</text>
</comment>
<comment type="induction">
    <text evidence="2">Not induced by endoplasmic reticulum stress.</text>
</comment>
<comment type="miscellaneous">
    <text>Associated with ER-derived protein bodies in endosperm.</text>
</comment>
<comment type="similarity">
    <text evidence="3">Belongs to the derlin family.</text>
</comment>
<keyword id="KW-0256">Endoplasmic reticulum</keyword>
<keyword id="KW-0472">Membrane</keyword>
<keyword id="KW-1185">Reference proteome</keyword>
<keyword id="KW-0812">Transmembrane</keyword>
<keyword id="KW-1133">Transmembrane helix</keyword>
<name>DER22_MAIZE</name>
<dbReference type="EMBL" id="AY854016">
    <property type="protein sequence ID" value="AAY41611.1"/>
    <property type="molecule type" value="mRNA"/>
</dbReference>
<dbReference type="EMBL" id="AY854020">
    <property type="protein sequence ID" value="AAY41615.1"/>
    <property type="molecule type" value="Genomic_DNA"/>
</dbReference>
<dbReference type="RefSeq" id="NP_001105799.1">
    <property type="nucleotide sequence ID" value="NM_001112329.2"/>
</dbReference>
<dbReference type="SMR" id="Q4G2J3"/>
<dbReference type="FunCoup" id="Q4G2J3">
    <property type="interactions" value="3151"/>
</dbReference>
<dbReference type="STRING" id="4577.Q4G2J3"/>
<dbReference type="PaxDb" id="4577-GRMZM2G112609_P01"/>
<dbReference type="EnsemblPlants" id="Zm00001eb064710_T002">
    <property type="protein sequence ID" value="Zm00001eb064710_P002"/>
    <property type="gene ID" value="Zm00001eb064710"/>
</dbReference>
<dbReference type="EnsemblPlants" id="Zm00001eb064710_T003">
    <property type="protein sequence ID" value="Zm00001eb064710_P003"/>
    <property type="gene ID" value="Zm00001eb064710"/>
</dbReference>
<dbReference type="EnsemblPlants" id="Zm00001eb064710_T005">
    <property type="protein sequence ID" value="Zm00001eb064710_P005"/>
    <property type="gene ID" value="Zm00001eb064710"/>
</dbReference>
<dbReference type="EnsemblPlants" id="Zm00001eb064710_T006">
    <property type="protein sequence ID" value="Zm00001eb064710_P006"/>
    <property type="gene ID" value="Zm00001eb064710"/>
</dbReference>
<dbReference type="GeneID" id="606472"/>
<dbReference type="Gramene" id="Zm00001eb064710_T002">
    <property type="protein sequence ID" value="Zm00001eb064710_P002"/>
    <property type="gene ID" value="Zm00001eb064710"/>
</dbReference>
<dbReference type="Gramene" id="Zm00001eb064710_T003">
    <property type="protein sequence ID" value="Zm00001eb064710_P003"/>
    <property type="gene ID" value="Zm00001eb064710"/>
</dbReference>
<dbReference type="Gramene" id="Zm00001eb064710_T005">
    <property type="protein sequence ID" value="Zm00001eb064710_P005"/>
    <property type="gene ID" value="Zm00001eb064710"/>
</dbReference>
<dbReference type="Gramene" id="Zm00001eb064710_T006">
    <property type="protein sequence ID" value="Zm00001eb064710_P006"/>
    <property type="gene ID" value="Zm00001eb064710"/>
</dbReference>
<dbReference type="KEGG" id="zma:606472"/>
<dbReference type="eggNOG" id="KOG0858">
    <property type="taxonomic scope" value="Eukaryota"/>
</dbReference>
<dbReference type="HOGENOM" id="CLU_051898_5_2_1"/>
<dbReference type="InParanoid" id="Q4G2J3"/>
<dbReference type="OMA" id="FKSQYWR"/>
<dbReference type="OrthoDB" id="1716531at2759"/>
<dbReference type="Proteomes" id="UP000007305">
    <property type="component" value="Chromosome 1"/>
</dbReference>
<dbReference type="ExpressionAtlas" id="Q4G2J3">
    <property type="expression patterns" value="baseline and differential"/>
</dbReference>
<dbReference type="GO" id="GO:0005789">
    <property type="term" value="C:endoplasmic reticulum membrane"/>
    <property type="evidence" value="ECO:0000318"/>
    <property type="project" value="GO_Central"/>
</dbReference>
<dbReference type="GO" id="GO:0005047">
    <property type="term" value="F:signal recognition particle binding"/>
    <property type="evidence" value="ECO:0000318"/>
    <property type="project" value="GO_Central"/>
</dbReference>
<dbReference type="GO" id="GO:0030968">
    <property type="term" value="P:endoplasmic reticulum unfolded protein response"/>
    <property type="evidence" value="ECO:0000318"/>
    <property type="project" value="GO_Central"/>
</dbReference>
<dbReference type="GO" id="GO:0036503">
    <property type="term" value="P:ERAD pathway"/>
    <property type="evidence" value="ECO:0000318"/>
    <property type="project" value="GO_Central"/>
</dbReference>
<dbReference type="InterPro" id="IPR007599">
    <property type="entry name" value="DER1"/>
</dbReference>
<dbReference type="InterPro" id="IPR035952">
    <property type="entry name" value="Rhomboid-like_sf"/>
</dbReference>
<dbReference type="PANTHER" id="PTHR11009">
    <property type="entry name" value="DER1-LIKE PROTEIN, DERLIN"/>
    <property type="match status" value="1"/>
</dbReference>
<dbReference type="Pfam" id="PF04511">
    <property type="entry name" value="DER1"/>
    <property type="match status" value="1"/>
</dbReference>
<dbReference type="SUPFAM" id="SSF144091">
    <property type="entry name" value="Rhomboid-like"/>
    <property type="match status" value="1"/>
</dbReference>
<organism>
    <name type="scientific">Zea mays</name>
    <name type="common">Maize</name>
    <dbReference type="NCBI Taxonomy" id="4577"/>
    <lineage>
        <taxon>Eukaryota</taxon>
        <taxon>Viridiplantae</taxon>
        <taxon>Streptophyta</taxon>
        <taxon>Embryophyta</taxon>
        <taxon>Tracheophyta</taxon>
        <taxon>Spermatophyta</taxon>
        <taxon>Magnoliopsida</taxon>
        <taxon>Liliopsida</taxon>
        <taxon>Poales</taxon>
        <taxon>Poaceae</taxon>
        <taxon>PACMAD clade</taxon>
        <taxon>Panicoideae</taxon>
        <taxon>Andropogonodae</taxon>
        <taxon>Andropogoneae</taxon>
        <taxon>Tripsacinae</taxon>
        <taxon>Zea</taxon>
    </lineage>
</organism>
<proteinExistence type="evidence at transcript level"/>
<protein>
    <recommendedName>
        <fullName>Derlin-2.2</fullName>
    </recommendedName>
    <alternativeName>
        <fullName>ZmDerlin2-2</fullName>
    </alternativeName>
</protein>
<reference key="1">
    <citation type="journal article" date="2005" name="Plant Physiol.">
        <title>Identification and characterization of endoplasmic reticulum-associated degradation proteins differentially affected by endoplasmic reticulum stress.</title>
        <authorList>
            <person name="Kirst M.E."/>
            <person name="Meyer D.J."/>
            <person name="Gibbon B.C."/>
            <person name="Jung R."/>
            <person name="Boston R.S."/>
        </authorList>
    </citation>
    <scope>NUCLEOTIDE SEQUENCE [GENOMIC DNA / MRNA]</scope>
    <scope>FUNCTION</scope>
    <scope>SUBCELLULAR LOCATION</scope>
    <scope>TISSUE SPECIFICITY</scope>
    <scope>INDUCTION</scope>
    <source>
        <strain>cv. LH132</strain>
    </source>
</reference>
<feature type="chain" id="PRO_0000249244" description="Derlin-2.2">
    <location>
        <begin position="1"/>
        <end position="249"/>
    </location>
</feature>
<feature type="topological domain" description="Cytoplasmic" evidence="1">
    <location>
        <begin position="1"/>
        <end position="21"/>
    </location>
</feature>
<feature type="transmembrane region" description="Helical; Name=1" evidence="1">
    <location>
        <begin position="22"/>
        <end position="42"/>
    </location>
</feature>
<feature type="topological domain" description="Lumenal" evidence="1">
    <location>
        <begin position="43"/>
        <end position="96"/>
    </location>
</feature>
<feature type="transmembrane region" description="Helical; Name=2" evidence="1">
    <location>
        <begin position="97"/>
        <end position="117"/>
    </location>
</feature>
<feature type="topological domain" description="Cytoplasmic" evidence="1">
    <location>
        <begin position="118"/>
        <end position="122"/>
    </location>
</feature>
<feature type="transmembrane region" description="Helical; Name=3" evidence="1">
    <location>
        <begin position="123"/>
        <end position="143"/>
    </location>
</feature>
<feature type="topological domain" description="Lumenal" evidence="1">
    <location>
        <begin position="144"/>
        <end position="152"/>
    </location>
</feature>
<feature type="transmembrane region" description="Helical; Name=4" evidence="1">
    <location>
        <begin position="153"/>
        <end position="173"/>
    </location>
</feature>
<feature type="topological domain" description="Cytoplasmic" evidence="1">
    <location>
        <begin position="174"/>
        <end position="249"/>
    </location>
</feature>